<comment type="function">
    <text evidence="1">May be involved in a process influencing telomere capping.</text>
</comment>
<comment type="subcellular location">
    <subcellularLocation>
        <location evidence="1">Vacuole</location>
    </subcellularLocation>
</comment>
<comment type="similarity">
    <text evidence="5">Belongs to the WD repeat RTC1 family.</text>
</comment>
<feature type="chain" id="PRO_0000408792" description="Restriction of telomere capping protein 1">
    <location>
        <begin position="1"/>
        <end position="1342"/>
    </location>
</feature>
<feature type="repeat" description="WD 1">
    <location>
        <begin position="207"/>
        <end position="248"/>
    </location>
</feature>
<feature type="repeat" description="WD 2">
    <location>
        <begin position="256"/>
        <end position="296"/>
    </location>
</feature>
<feature type="repeat" description="WD 3">
    <location>
        <begin position="305"/>
        <end position="342"/>
    </location>
</feature>
<feature type="repeat" description="WD 4">
    <location>
        <begin position="367"/>
        <end position="406"/>
    </location>
</feature>
<feature type="repeat" description="WD 5">
    <location>
        <begin position="439"/>
        <end position="486"/>
    </location>
</feature>
<feature type="repeat" description="WD 6">
    <location>
        <begin position="489"/>
        <end position="527"/>
    </location>
</feature>
<feature type="repeat" description="WD 7">
    <location>
        <begin position="844"/>
        <end position="884"/>
    </location>
</feature>
<feature type="repeat" description="WD 8">
    <location>
        <begin position="1130"/>
        <end position="1170"/>
    </location>
</feature>
<feature type="repeat" description="WD 9">
    <location>
        <begin position="1217"/>
        <end position="1256"/>
    </location>
</feature>
<feature type="zinc finger region" description="RING-type; degenerate" evidence="3">
    <location>
        <begin position="1294"/>
        <end position="1336"/>
    </location>
</feature>
<feature type="region of interest" description="Disordered" evidence="4">
    <location>
        <begin position="1"/>
        <end position="39"/>
    </location>
</feature>
<feature type="region of interest" description="Disordered" evidence="4">
    <location>
        <begin position="559"/>
        <end position="593"/>
    </location>
</feature>
<feature type="region of interest" description="Disordered" evidence="4">
    <location>
        <begin position="600"/>
        <end position="619"/>
    </location>
</feature>
<feature type="region of interest" description="Disordered" evidence="4">
    <location>
        <begin position="630"/>
        <end position="651"/>
    </location>
</feature>
<feature type="region of interest" description="Disordered" evidence="4">
    <location>
        <begin position="736"/>
        <end position="766"/>
    </location>
</feature>
<feature type="region of interest" description="Disordered" evidence="4">
    <location>
        <begin position="788"/>
        <end position="831"/>
    </location>
</feature>
<feature type="region of interest" description="Disordered" evidence="4">
    <location>
        <begin position="942"/>
        <end position="962"/>
    </location>
</feature>
<feature type="region of interest" description="Disordered" evidence="4">
    <location>
        <begin position="1014"/>
        <end position="1043"/>
    </location>
</feature>
<feature type="compositionally biased region" description="Low complexity" evidence="4">
    <location>
        <begin position="630"/>
        <end position="644"/>
    </location>
</feature>
<feature type="compositionally biased region" description="Acidic residues" evidence="4">
    <location>
        <begin position="753"/>
        <end position="766"/>
    </location>
</feature>
<feature type="compositionally biased region" description="Low complexity" evidence="4">
    <location>
        <begin position="815"/>
        <end position="824"/>
    </location>
</feature>
<feature type="compositionally biased region" description="Basic and acidic residues" evidence="4">
    <location>
        <begin position="952"/>
        <end position="962"/>
    </location>
</feature>
<feature type="compositionally biased region" description="Basic and acidic residues" evidence="4">
    <location>
        <begin position="1016"/>
        <end position="1028"/>
    </location>
</feature>
<feature type="modified residue" description="Phosphoserine" evidence="2">
    <location>
        <position position="1037"/>
    </location>
</feature>
<feature type="modified residue" description="Phosphoserine" evidence="2">
    <location>
        <position position="1081"/>
    </location>
</feature>
<feature type="modified residue" description="Phosphoserine" evidence="2">
    <location>
        <position position="1088"/>
    </location>
</feature>
<feature type="modified residue" description="Phosphoserine" evidence="2">
    <location>
        <position position="1090"/>
    </location>
</feature>
<feature type="modified residue" description="Phosphoserine" evidence="2">
    <location>
        <position position="1124"/>
    </location>
</feature>
<feature type="modified residue" description="Phosphoserine" evidence="2">
    <location>
        <position position="1134"/>
    </location>
</feature>
<evidence type="ECO:0000250" key="1"/>
<evidence type="ECO:0000250" key="2">
    <source>
        <dbReference type="UniProtKB" id="Q08281"/>
    </source>
</evidence>
<evidence type="ECO:0000255" key="3">
    <source>
        <dbReference type="PROSITE-ProRule" id="PRU00175"/>
    </source>
</evidence>
<evidence type="ECO:0000256" key="4">
    <source>
        <dbReference type="SAM" id="MobiDB-lite"/>
    </source>
</evidence>
<evidence type="ECO:0000305" key="5"/>
<keyword id="KW-0479">Metal-binding</keyword>
<keyword id="KW-0597">Phosphoprotein</keyword>
<keyword id="KW-0677">Repeat</keyword>
<keyword id="KW-0926">Vacuole</keyword>
<keyword id="KW-0853">WD repeat</keyword>
<keyword id="KW-0862">Zinc</keyword>
<keyword id="KW-0863">Zinc-finger</keyword>
<name>RTC1_YEAS8</name>
<organism>
    <name type="scientific">Saccharomyces cerevisiae (strain Lalvin EC1118 / Prise de mousse)</name>
    <name type="common">Baker's yeast</name>
    <dbReference type="NCBI Taxonomy" id="643680"/>
    <lineage>
        <taxon>Eukaryota</taxon>
        <taxon>Fungi</taxon>
        <taxon>Dikarya</taxon>
        <taxon>Ascomycota</taxon>
        <taxon>Saccharomycotina</taxon>
        <taxon>Saccharomycetes</taxon>
        <taxon>Saccharomycetales</taxon>
        <taxon>Saccharomycetaceae</taxon>
        <taxon>Saccharomyces</taxon>
    </lineage>
</organism>
<dbReference type="EMBL" id="FN394216">
    <property type="protein sequence ID" value="CAY86154.1"/>
    <property type="molecule type" value="Genomic_DNA"/>
</dbReference>
<dbReference type="SMR" id="C8ZHH9"/>
<dbReference type="HOGENOM" id="CLU_008512_0_0_1"/>
<dbReference type="OrthoDB" id="37178at4893"/>
<dbReference type="Proteomes" id="UP000000286">
    <property type="component" value="Chromosome XV, Scaffold EC1118_1O4"/>
</dbReference>
<dbReference type="GO" id="GO:0005829">
    <property type="term" value="C:cytosol"/>
    <property type="evidence" value="ECO:0007669"/>
    <property type="project" value="TreeGrafter"/>
</dbReference>
<dbReference type="GO" id="GO:0061700">
    <property type="term" value="C:GATOR2 complex"/>
    <property type="evidence" value="ECO:0007669"/>
    <property type="project" value="TreeGrafter"/>
</dbReference>
<dbReference type="GO" id="GO:0005774">
    <property type="term" value="C:vacuolar membrane"/>
    <property type="evidence" value="ECO:0007669"/>
    <property type="project" value="TreeGrafter"/>
</dbReference>
<dbReference type="GO" id="GO:0008270">
    <property type="term" value="F:zinc ion binding"/>
    <property type="evidence" value="ECO:0007669"/>
    <property type="project" value="UniProtKB-KW"/>
</dbReference>
<dbReference type="GO" id="GO:0016239">
    <property type="term" value="P:positive regulation of macroautophagy"/>
    <property type="evidence" value="ECO:0007669"/>
    <property type="project" value="TreeGrafter"/>
</dbReference>
<dbReference type="GO" id="GO:1904263">
    <property type="term" value="P:positive regulation of TORC1 signaling"/>
    <property type="evidence" value="ECO:0007669"/>
    <property type="project" value="TreeGrafter"/>
</dbReference>
<dbReference type="CDD" id="cd16488">
    <property type="entry name" value="mRING-H2-C3H3C2_Mio-like"/>
    <property type="match status" value="1"/>
</dbReference>
<dbReference type="FunFam" id="2.130.10.10:FF:001334">
    <property type="entry name" value="Restriction of telomere capping protein 1"/>
    <property type="match status" value="1"/>
</dbReference>
<dbReference type="Gene3D" id="2.130.10.10">
    <property type="entry name" value="YVTN repeat-like/Quinoprotein amine dehydrogenase"/>
    <property type="match status" value="1"/>
</dbReference>
<dbReference type="Gene3D" id="3.30.40.10">
    <property type="entry name" value="Zinc/RING finger domain, C3HC4 (zinc finger)"/>
    <property type="match status" value="1"/>
</dbReference>
<dbReference type="InterPro" id="IPR015943">
    <property type="entry name" value="WD40/YVTN_repeat-like_dom_sf"/>
</dbReference>
<dbReference type="InterPro" id="IPR019775">
    <property type="entry name" value="WD40_repeat_CS"/>
</dbReference>
<dbReference type="InterPro" id="IPR036322">
    <property type="entry name" value="WD40_repeat_dom_sf"/>
</dbReference>
<dbReference type="InterPro" id="IPR001680">
    <property type="entry name" value="WD40_rpt"/>
</dbReference>
<dbReference type="InterPro" id="IPR037590">
    <property type="entry name" value="WDR24"/>
</dbReference>
<dbReference type="InterPro" id="IPR049566">
    <property type="entry name" value="WDR59_RTC1-like_RING_Znf"/>
</dbReference>
<dbReference type="InterPro" id="IPR001841">
    <property type="entry name" value="Znf_RING"/>
</dbReference>
<dbReference type="InterPro" id="IPR013083">
    <property type="entry name" value="Znf_RING/FYVE/PHD"/>
</dbReference>
<dbReference type="PANTHER" id="PTHR46200">
    <property type="entry name" value="GATOR COMPLEX PROTEIN WDR24"/>
    <property type="match status" value="1"/>
</dbReference>
<dbReference type="PANTHER" id="PTHR46200:SF1">
    <property type="entry name" value="GATOR COMPLEX PROTEIN WDR24"/>
    <property type="match status" value="1"/>
</dbReference>
<dbReference type="Pfam" id="PF00400">
    <property type="entry name" value="WD40"/>
    <property type="match status" value="2"/>
</dbReference>
<dbReference type="Pfam" id="PF17120">
    <property type="entry name" value="zf-RING_16"/>
    <property type="match status" value="1"/>
</dbReference>
<dbReference type="SMART" id="SM00320">
    <property type="entry name" value="WD40"/>
    <property type="match status" value="2"/>
</dbReference>
<dbReference type="SUPFAM" id="SSF57850">
    <property type="entry name" value="RING/U-box"/>
    <property type="match status" value="1"/>
</dbReference>
<dbReference type="SUPFAM" id="SSF50978">
    <property type="entry name" value="WD40 repeat-like"/>
    <property type="match status" value="1"/>
</dbReference>
<dbReference type="PROSITE" id="PS00678">
    <property type="entry name" value="WD_REPEATS_1"/>
    <property type="match status" value="1"/>
</dbReference>
<dbReference type="PROSITE" id="PS50082">
    <property type="entry name" value="WD_REPEATS_2"/>
    <property type="match status" value="2"/>
</dbReference>
<dbReference type="PROSITE" id="PS50294">
    <property type="entry name" value="WD_REPEATS_REGION"/>
    <property type="match status" value="2"/>
</dbReference>
<dbReference type="PROSITE" id="PS50089">
    <property type="entry name" value="ZF_RING_2"/>
    <property type="match status" value="1"/>
</dbReference>
<proteinExistence type="inferred from homology"/>
<protein>
    <recommendedName>
        <fullName>Restriction of telomere capping protein 1</fullName>
    </recommendedName>
</protein>
<gene>
    <name type="primary">RTC1</name>
    <name type="ORF">EC1118_1O4_0265g</name>
</gene>
<accession>C8ZHH9</accession>
<reference key="1">
    <citation type="journal article" date="2009" name="Proc. Natl. Acad. Sci. U.S.A.">
        <title>Eukaryote-to-eukaryote gene transfer events revealed by the genome sequence of the wine yeast Saccharomyces cerevisiae EC1118.</title>
        <authorList>
            <person name="Novo M."/>
            <person name="Bigey F."/>
            <person name="Beyne E."/>
            <person name="Galeote V."/>
            <person name="Gavory F."/>
            <person name="Mallet S."/>
            <person name="Cambon B."/>
            <person name="Legras J.-L."/>
            <person name="Wincker P."/>
            <person name="Casaregola S."/>
            <person name="Dequin S."/>
        </authorList>
    </citation>
    <scope>NUCLEOTIDE SEQUENCE [LARGE SCALE GENOMIC DNA]</scope>
    <source>
        <strain>Lalvin EC1118 / Prise de mousse</strain>
    </source>
</reference>
<sequence length="1342" mass="149503">MSLSPHVENASIPKGSTPIPKNRNVSSIGKGEFLGSSSSNNSSFRMNHYSNSGQPSVLDSIRRPNLTPTFSYSNGVYMPESHRTSSFNDSYLPYDKNPYAKTTGSMSNKSNMKIKTKKNAINTNTRKSSGLIYTTKVDKELSSIDKVNDPNINGLVCAGKTHLGLYKFSPSDRSIKCVHDFITPNSNTSTRGTTSLLPKLSKRTRQNKFSTIADVKTGFNNYKNCIAVCNNSTAISIYDLNKSSSIDNPLITSLCEHTRSINSFDFNMVESNLIISGGQDSCVKIWDLRSNKSKSSNRSDISINTASDSIRDVKWMPGYNFASKNDQGSSTYGNLKSGYKFASIHDSGYLLKFDLRQPAQYEKKLNAHTGPGLCLNWHPNQEYIATGGRDGKCCLWFVGDNANAAENTVLNYGNSPSLHAPNTSLNNSGSLAFPKLTINTGYPVTKLKFKPAYSSNIYNSLLGISSMGDEAEVRIYSLARKYIPKHVLLSETPSLGLVWWDENLIFNIDKGTRINGWDINKEPTVLENLSKNTTTWRDLDGNGLLSVDQEIGSYEVVEPELQPTSSTTCKKHPGTIKNPKNGNPENQGIIGGIKKGFSHTGLTSFTPERPPTLKAGPTFSTKSLTLASGASSFNSSSASLTSLTPQTENREEIAIEPPCIITLDIPQIFNNIRLTKIAHSRKKNVISESSSMKNSPVEKFKYLARQLKFSYIREHNVSDSADTAYKNDIENIDVVKNATETHGDNTTTTNNNDDGDDDDDDDDDDDKIIESHLLKKYNFPENNTWATLMNEKVNNKKSKRNSSSSREFDEKDVRSSISSISASRQSHDRSRKIDKNVEAELQEKIQTLVDLISIATHNASVYLSIDDLTNFKIWILIRDSLLWDLKWMTSSQISSDNASNMDANESSDFEAGENLKTGKEFPEEDGAGTSGAESLVEERPQAFRANSDEPSDAEKKPVSKLKEQLKNTEIIPYAQPNEDSDEVLIKLKELQNQRLESRTKMGETVSDDVIIEEDEHEHQEEEQPHDSPTKSAQFHASPIAKSIPILQKREHRKSFIDTFMLHSPNGYNGDTDIGNEDDNISLRFTYNSVSPRSKVSSLQSYATTTSQLETFKKLSSHTAPIIGSPRHAPSRPDSIGREQLSSSLTKKLAKCKKIIADPPWDTKKLIKQLYNQATETGNVVLTVNILFLFQTIYQITEIDIAKDAIAHFLLLLHRYELFGIAADVLKYCPFEDIMGSEGDQSSIRLFCERCGELITNESSKEKLRAEAQQTGNKKIMDKFGYWYCDSCKKKNTSCVLCERPLKKLTMVILPCGHEGHFQCIQEWFLDENEQECPGGCPGVAFI</sequence>